<sequence>MSKQSSCAIMGKSLSFSLSRGERADLEMPTDPLVLGVKRMMFDRETSTFLLISTVFLNINEKDSHLKILCCNCVSDLRTRINLPCVLIQCRKYNSEAFKYCILLLHNLNRVERLLSFELNHALDENTKIFDGPIVFWQYLNQFFYISSAIGKVTTISLMLSSIEWIGEIENFGLGFLGLAEPSEDKCTQKLSESDYEFSNSSLCAYALKSQEMLSNGYLIPLAYSTMVTHVHVWAAEMVDHQLRTSLIALTRKNQLILFQNGIPVRACQLPFPGPRSVQILDAGKRNRFFIVSFPSKACAVSEKKFKVVAKWEQLSLVLVNDFAGVGTEQVLVVFEDSLDADQLTSFTVTDFVKIWYSTKPLDCCEDPLAEEEHENYYLVLPALEGQLDNSFIFLNKIQQHISFKDKFIAKSWKALLNAVYGKGDSLPSDEMVKLDQDGLVPFCDEGEDSVPTPEENLPDNFPEPEHIVEQTWCHVLDDDLVVGAKVTSLKESNEMTLSLIMNQGNRSSFHLMKCHSQVWLLKHMKCERIQECTEIYLYKKLRNCGALFSWEQRTASEGILTIYCRSQGVLFQCLDHLIKVLPEICSFKYLKVENEDFLVDHLSSTLEAELVTFCSVSTSAFEYVRGGYNCRIRRTDNRAMTFLGRRAKIRQSKRKVQRERILKHLNMTVNGSSYAEMTLALAEIQLKSDLIVKTLANFVIAL</sequence>
<proteinExistence type="evidence at transcript level"/>
<protein>
    <recommendedName>
        <fullName>Fanconi anemia group B protein homolog</fullName>
        <shortName>Protein FACB</shortName>
    </recommendedName>
</protein>
<reference key="1">
    <citation type="journal article" date="2004" name="Genome Res.">
        <title>The status, quality, and expansion of the NIH full-length cDNA project: the Mammalian Gene Collection (MGC).</title>
        <authorList>
            <consortium name="The MGC Project Team"/>
        </authorList>
    </citation>
    <scope>NUCLEOTIDE SEQUENCE [LARGE SCALE MRNA]</scope>
    <source>
        <strain>C57BL/6J</strain>
        <tissue>Embryonic germ cell</tissue>
    </source>
</reference>
<keyword id="KW-0227">DNA damage</keyword>
<keyword id="KW-0234">DNA repair</keyword>
<keyword id="KW-0539">Nucleus</keyword>
<keyword id="KW-1185">Reference proteome</keyword>
<dbReference type="EMBL" id="BC083151">
    <property type="protein sequence ID" value="AAH83151.1"/>
    <property type="status" value="ALT_INIT"/>
    <property type="molecule type" value="mRNA"/>
</dbReference>
<dbReference type="RefSeq" id="NP_001139553.1">
    <property type="nucleotide sequence ID" value="NM_001146081.1"/>
</dbReference>
<dbReference type="RefSeq" id="NP_778192.3">
    <property type="nucleotide sequence ID" value="NM_175027.4"/>
</dbReference>
<dbReference type="SMR" id="Q5XJY6"/>
<dbReference type="BioGRID" id="231849">
    <property type="interactions" value="2"/>
</dbReference>
<dbReference type="FunCoup" id="Q5XJY6">
    <property type="interactions" value="466"/>
</dbReference>
<dbReference type="STRING" id="10090.ENSMUSP00000128141"/>
<dbReference type="iPTMnet" id="Q5XJY6"/>
<dbReference type="PhosphoSitePlus" id="Q5XJY6"/>
<dbReference type="ProteomicsDB" id="277039"/>
<dbReference type="DNASU" id="237211"/>
<dbReference type="GeneID" id="237211"/>
<dbReference type="KEGG" id="mmu:237211"/>
<dbReference type="AGR" id="MGI:2448558"/>
<dbReference type="CTD" id="2187"/>
<dbReference type="MGI" id="MGI:2448558">
    <property type="gene designation" value="Fancb"/>
</dbReference>
<dbReference type="eggNOG" id="ENOG502QWED">
    <property type="taxonomic scope" value="Eukaryota"/>
</dbReference>
<dbReference type="InParanoid" id="Q5XJY6"/>
<dbReference type="OrthoDB" id="1917888at2759"/>
<dbReference type="Reactome" id="R-MMU-6783310">
    <property type="pathway name" value="Fanconi Anemia Pathway"/>
</dbReference>
<dbReference type="Reactome" id="R-MMU-9833482">
    <property type="pathway name" value="PKR-mediated signaling"/>
</dbReference>
<dbReference type="BioGRID-ORCS" id="237211">
    <property type="hits" value="26 hits in 115 CRISPR screens"/>
</dbReference>
<dbReference type="PRO" id="PR:Q5XJY6"/>
<dbReference type="Proteomes" id="UP000000589">
    <property type="component" value="Unplaced"/>
</dbReference>
<dbReference type="RNAct" id="Q5XJY6">
    <property type="molecule type" value="protein"/>
</dbReference>
<dbReference type="GO" id="GO:0043240">
    <property type="term" value="C:Fanconi anaemia nuclear complex"/>
    <property type="evidence" value="ECO:0000250"/>
    <property type="project" value="UniProtKB"/>
</dbReference>
<dbReference type="GO" id="GO:0048539">
    <property type="term" value="P:bone marrow development"/>
    <property type="evidence" value="ECO:0000315"/>
    <property type="project" value="MGI"/>
</dbReference>
<dbReference type="GO" id="GO:0072757">
    <property type="term" value="P:cellular response to camptothecin"/>
    <property type="evidence" value="ECO:0000316"/>
    <property type="project" value="MGI"/>
</dbReference>
<dbReference type="GO" id="GO:0071466">
    <property type="term" value="P:cellular response to xenobiotic stimulus"/>
    <property type="evidence" value="ECO:0000315"/>
    <property type="project" value="MGI"/>
</dbReference>
<dbReference type="GO" id="GO:0010467">
    <property type="term" value="P:gene expression"/>
    <property type="evidence" value="ECO:0000315"/>
    <property type="project" value="MGI"/>
</dbReference>
<dbReference type="GO" id="GO:0060218">
    <property type="term" value="P:hematopoietic stem cell differentiation"/>
    <property type="evidence" value="ECO:0000315"/>
    <property type="project" value="MGI"/>
</dbReference>
<dbReference type="GO" id="GO:0036297">
    <property type="term" value="P:interstrand cross-link repair"/>
    <property type="evidence" value="ECO:0007669"/>
    <property type="project" value="InterPro"/>
</dbReference>
<dbReference type="GO" id="GO:2000042">
    <property type="term" value="P:negative regulation of double-strand break repair via homologous recombination"/>
    <property type="evidence" value="ECO:0000316"/>
    <property type="project" value="MGI"/>
</dbReference>
<dbReference type="GO" id="GO:1905168">
    <property type="term" value="P:positive regulation of double-strand break repair via homologous recombination"/>
    <property type="evidence" value="ECO:0000316"/>
    <property type="project" value="MGI"/>
</dbReference>
<dbReference type="GO" id="GO:1990414">
    <property type="term" value="P:replication-born double-strand break repair via sister chromatid exchange"/>
    <property type="evidence" value="ECO:0000315"/>
    <property type="project" value="MGI"/>
</dbReference>
<dbReference type="GO" id="GO:0006950">
    <property type="term" value="P:response to stress"/>
    <property type="evidence" value="ECO:0000315"/>
    <property type="project" value="MGI"/>
</dbReference>
<dbReference type="GO" id="GO:0009410">
    <property type="term" value="P:response to xenobiotic stimulus"/>
    <property type="evidence" value="ECO:0000315"/>
    <property type="project" value="MGI"/>
</dbReference>
<dbReference type="InterPro" id="IPR033333">
    <property type="entry name" value="FANCB"/>
</dbReference>
<dbReference type="PANTHER" id="PTHR28450">
    <property type="entry name" value="FANCONI ANEMIA GROUP B PROTEIN"/>
    <property type="match status" value="1"/>
</dbReference>
<dbReference type="PANTHER" id="PTHR28450:SF1">
    <property type="entry name" value="FANCONI ANEMIA GROUP B PROTEIN"/>
    <property type="match status" value="1"/>
</dbReference>
<gene>
    <name type="primary">Fancb</name>
</gene>
<evidence type="ECO:0000250" key="1"/>
<evidence type="ECO:0000305" key="2"/>
<name>FANCB_MOUSE</name>
<organism>
    <name type="scientific">Mus musculus</name>
    <name type="common">Mouse</name>
    <dbReference type="NCBI Taxonomy" id="10090"/>
    <lineage>
        <taxon>Eukaryota</taxon>
        <taxon>Metazoa</taxon>
        <taxon>Chordata</taxon>
        <taxon>Craniata</taxon>
        <taxon>Vertebrata</taxon>
        <taxon>Euteleostomi</taxon>
        <taxon>Mammalia</taxon>
        <taxon>Eutheria</taxon>
        <taxon>Euarchontoglires</taxon>
        <taxon>Glires</taxon>
        <taxon>Rodentia</taxon>
        <taxon>Myomorpha</taxon>
        <taxon>Muroidea</taxon>
        <taxon>Muridae</taxon>
        <taxon>Murinae</taxon>
        <taxon>Mus</taxon>
        <taxon>Mus</taxon>
    </lineage>
</organism>
<comment type="function">
    <text evidence="1">DNA repair protein required for FANCD2 ubiquitination.</text>
</comment>
<comment type="subunit">
    <text evidence="1">Belongs to the multisubunit FA complex composed of FANCA, FANCB, FANCC, FANCE, FANCF, FANCG, FANCL/PHF9 and FANCM.</text>
</comment>
<comment type="subcellular location">
    <subcellularLocation>
        <location evidence="1">Nucleus</location>
    </subcellularLocation>
</comment>
<comment type="sequence caution" evidence="2">
    <conflict type="erroneous initiation">
        <sequence resource="EMBL-CDS" id="AAH83151"/>
    </conflict>
</comment>
<feature type="chain" id="PRO_0000087182" description="Fanconi anemia group B protein homolog">
    <location>
        <begin position="1"/>
        <end position="703"/>
    </location>
</feature>
<accession>Q5XJY6</accession>